<name>C135B_MYCTU</name>
<proteinExistence type="evidence at protein level"/>
<sequence>MSGTSSMGLPPGPRLSGSVQAVLMLRHGLRFLTACQRRYGSVFTLHVAGFGHMVYLSDPAAIKTVFAGNPSVFHAGEANSMLAGLLGDSSLLLIDDDVHRDRRRLMSPPFHRDAVARQAGPIAEIAAANIAGWPMAKAFAVAPKMSEITLEVILRTVIGASDPVRLAALRKVMPRLLNVGPWATLALANPSLLNNRLWSRLRRRIEEADALLYAEIADRRADPDLAARTDTLAMLVRAADEDGRTMTERELRDQLITLLVAGHDTTATGLSWALERLTRHPVTLAKAVQAADASAAGDPAGDEYLDAVAKETLRIRPVVYDVGRVLTEAVEVAGYRLPAGVMVVPAIGLVHASAQLYPDPERFDPDRMVGATLSPTTWLPFGGGNRRCLGATFAMVEMRVVLREILRRVELSTTTTSGERPKLKHVIMVPHRGARIRVRATRDVSATSQATAQGAGCPAARGGGPSRAVGSQ</sequence>
<dbReference type="EC" id="1.14.-.-"/>
<dbReference type="EMBL" id="AL123456">
    <property type="protein sequence ID" value="CCP43306.1"/>
    <property type="molecule type" value="Genomic_DNA"/>
</dbReference>
<dbReference type="PIR" id="G70932">
    <property type="entry name" value="G70932"/>
</dbReference>
<dbReference type="RefSeq" id="NP_215082.1">
    <property type="nucleotide sequence ID" value="NC_000962.3"/>
</dbReference>
<dbReference type="RefSeq" id="WP_003402992.1">
    <property type="nucleotide sequence ID" value="NZ_NVQJ01000036.1"/>
</dbReference>
<dbReference type="SMR" id="P9WPM9"/>
<dbReference type="FunCoup" id="P9WPM9">
    <property type="interactions" value="38"/>
</dbReference>
<dbReference type="STRING" id="83332.Rv0568"/>
<dbReference type="PaxDb" id="83332-Rv0568"/>
<dbReference type="GeneID" id="887654"/>
<dbReference type="KEGG" id="mtu:Rv0568"/>
<dbReference type="KEGG" id="mtv:RVBD_0568"/>
<dbReference type="PATRIC" id="fig|83332.111.peg.626"/>
<dbReference type="TubercuList" id="Rv0568"/>
<dbReference type="eggNOG" id="COG2124">
    <property type="taxonomic scope" value="Bacteria"/>
</dbReference>
<dbReference type="InParanoid" id="P9WPM9"/>
<dbReference type="OrthoDB" id="7376058at2"/>
<dbReference type="PhylomeDB" id="P9WPM9"/>
<dbReference type="Proteomes" id="UP000001584">
    <property type="component" value="Chromosome"/>
</dbReference>
<dbReference type="GO" id="GO:0005829">
    <property type="term" value="C:cytosol"/>
    <property type="evidence" value="ECO:0007005"/>
    <property type="project" value="MTBBASE"/>
</dbReference>
<dbReference type="GO" id="GO:0020037">
    <property type="term" value="F:heme binding"/>
    <property type="evidence" value="ECO:0007669"/>
    <property type="project" value="InterPro"/>
</dbReference>
<dbReference type="GO" id="GO:0005506">
    <property type="term" value="F:iron ion binding"/>
    <property type="evidence" value="ECO:0007669"/>
    <property type="project" value="InterPro"/>
</dbReference>
<dbReference type="GO" id="GO:0004497">
    <property type="term" value="F:monooxygenase activity"/>
    <property type="evidence" value="ECO:0007669"/>
    <property type="project" value="UniProtKB-KW"/>
</dbReference>
<dbReference type="GO" id="GO:0016491">
    <property type="term" value="F:oxidoreductase activity"/>
    <property type="evidence" value="ECO:0000318"/>
    <property type="project" value="GO_Central"/>
</dbReference>
<dbReference type="GO" id="GO:0016705">
    <property type="term" value="F:oxidoreductase activity, acting on paired donors, with incorporation or reduction of molecular oxygen"/>
    <property type="evidence" value="ECO:0007669"/>
    <property type="project" value="InterPro"/>
</dbReference>
<dbReference type="CDD" id="cd11053">
    <property type="entry name" value="CYP110-like"/>
    <property type="match status" value="1"/>
</dbReference>
<dbReference type="Gene3D" id="1.10.630.10">
    <property type="entry name" value="Cytochrome P450"/>
    <property type="match status" value="1"/>
</dbReference>
<dbReference type="InterPro" id="IPR001128">
    <property type="entry name" value="Cyt_P450"/>
</dbReference>
<dbReference type="InterPro" id="IPR017972">
    <property type="entry name" value="Cyt_P450_CS"/>
</dbReference>
<dbReference type="InterPro" id="IPR002401">
    <property type="entry name" value="Cyt_P450_E_grp-I"/>
</dbReference>
<dbReference type="InterPro" id="IPR036396">
    <property type="entry name" value="Cyt_P450_sf"/>
</dbReference>
<dbReference type="InterPro" id="IPR050121">
    <property type="entry name" value="Cytochrome_P450_monoxygenase"/>
</dbReference>
<dbReference type="PANTHER" id="PTHR24305">
    <property type="entry name" value="CYTOCHROME P450"/>
    <property type="match status" value="1"/>
</dbReference>
<dbReference type="PANTHER" id="PTHR24305:SF166">
    <property type="entry name" value="CYTOCHROME P450 12A4, MITOCHONDRIAL-RELATED"/>
    <property type="match status" value="1"/>
</dbReference>
<dbReference type="Pfam" id="PF00067">
    <property type="entry name" value="p450"/>
    <property type="match status" value="1"/>
</dbReference>
<dbReference type="PRINTS" id="PR00463">
    <property type="entry name" value="EP450I"/>
</dbReference>
<dbReference type="PRINTS" id="PR00385">
    <property type="entry name" value="P450"/>
</dbReference>
<dbReference type="SUPFAM" id="SSF48264">
    <property type="entry name" value="Cytochrome P450"/>
    <property type="match status" value="1"/>
</dbReference>
<dbReference type="PROSITE" id="PS00086">
    <property type="entry name" value="CYTOCHROME_P450"/>
    <property type="match status" value="1"/>
</dbReference>
<accession>P9WPM9</accession>
<accession>L0T464</accession>
<accession>O53765</accession>
<accession>P63715</accession>
<comment type="cofactor">
    <cofactor evidence="1">
        <name>heme</name>
        <dbReference type="ChEBI" id="CHEBI:30413"/>
    </cofactor>
</comment>
<comment type="similarity">
    <text evidence="3">Belongs to the cytochrome P450 family.</text>
</comment>
<protein>
    <recommendedName>
        <fullName>Putative cytochrome P450 135B1</fullName>
        <ecNumber>1.14.-.-</ecNumber>
    </recommendedName>
</protein>
<keyword id="KW-0349">Heme</keyword>
<keyword id="KW-0408">Iron</keyword>
<keyword id="KW-0479">Metal-binding</keyword>
<keyword id="KW-0503">Monooxygenase</keyword>
<keyword id="KW-0560">Oxidoreductase</keyword>
<keyword id="KW-1185">Reference proteome</keyword>
<evidence type="ECO:0000250" key="1"/>
<evidence type="ECO:0000256" key="2">
    <source>
        <dbReference type="SAM" id="MobiDB-lite"/>
    </source>
</evidence>
<evidence type="ECO:0000305" key="3"/>
<organism>
    <name type="scientific">Mycobacterium tuberculosis (strain ATCC 25618 / H37Rv)</name>
    <dbReference type="NCBI Taxonomy" id="83332"/>
    <lineage>
        <taxon>Bacteria</taxon>
        <taxon>Bacillati</taxon>
        <taxon>Actinomycetota</taxon>
        <taxon>Actinomycetes</taxon>
        <taxon>Mycobacteriales</taxon>
        <taxon>Mycobacteriaceae</taxon>
        <taxon>Mycobacterium</taxon>
        <taxon>Mycobacterium tuberculosis complex</taxon>
    </lineage>
</organism>
<reference key="1">
    <citation type="journal article" date="1998" name="Nature">
        <title>Deciphering the biology of Mycobacterium tuberculosis from the complete genome sequence.</title>
        <authorList>
            <person name="Cole S.T."/>
            <person name="Brosch R."/>
            <person name="Parkhill J."/>
            <person name="Garnier T."/>
            <person name="Churcher C.M."/>
            <person name="Harris D.E."/>
            <person name="Gordon S.V."/>
            <person name="Eiglmeier K."/>
            <person name="Gas S."/>
            <person name="Barry C.E. III"/>
            <person name="Tekaia F."/>
            <person name="Badcock K."/>
            <person name="Basham D."/>
            <person name="Brown D."/>
            <person name="Chillingworth T."/>
            <person name="Connor R."/>
            <person name="Davies R.M."/>
            <person name="Devlin K."/>
            <person name="Feltwell T."/>
            <person name="Gentles S."/>
            <person name="Hamlin N."/>
            <person name="Holroyd S."/>
            <person name="Hornsby T."/>
            <person name="Jagels K."/>
            <person name="Krogh A."/>
            <person name="McLean J."/>
            <person name="Moule S."/>
            <person name="Murphy L.D."/>
            <person name="Oliver S."/>
            <person name="Osborne J."/>
            <person name="Quail M.A."/>
            <person name="Rajandream M.A."/>
            <person name="Rogers J."/>
            <person name="Rutter S."/>
            <person name="Seeger K."/>
            <person name="Skelton S."/>
            <person name="Squares S."/>
            <person name="Squares R."/>
            <person name="Sulston J.E."/>
            <person name="Taylor K."/>
            <person name="Whitehead S."/>
            <person name="Barrell B.G."/>
        </authorList>
    </citation>
    <scope>NUCLEOTIDE SEQUENCE [LARGE SCALE GENOMIC DNA]</scope>
    <source>
        <strain>ATCC 25618 / H37Rv</strain>
    </source>
</reference>
<reference key="2">
    <citation type="journal article" date="2011" name="Mol. Cell. Proteomics">
        <title>Proteogenomic analysis of Mycobacterium tuberculosis by high resolution mass spectrometry.</title>
        <authorList>
            <person name="Kelkar D.S."/>
            <person name="Kumar D."/>
            <person name="Kumar P."/>
            <person name="Balakrishnan L."/>
            <person name="Muthusamy B."/>
            <person name="Yadav A.K."/>
            <person name="Shrivastava P."/>
            <person name="Marimuthu A."/>
            <person name="Anand S."/>
            <person name="Sundaram H."/>
            <person name="Kingsbury R."/>
            <person name="Harsha H.C."/>
            <person name="Nair B."/>
            <person name="Prasad T.S."/>
            <person name="Chauhan D.S."/>
            <person name="Katoch K."/>
            <person name="Katoch V.M."/>
            <person name="Kumar P."/>
            <person name="Chaerkady R."/>
            <person name="Ramachandran S."/>
            <person name="Dash D."/>
            <person name="Pandey A."/>
        </authorList>
    </citation>
    <scope>IDENTIFICATION BY MASS SPECTROMETRY [LARGE SCALE ANALYSIS]</scope>
    <source>
        <strain>ATCC 25618 / H37Rv</strain>
    </source>
</reference>
<feature type="chain" id="PRO_0000052293" description="Putative cytochrome P450 135B1">
    <location>
        <begin position="1"/>
        <end position="472"/>
    </location>
</feature>
<feature type="region of interest" description="Disordered" evidence="2">
    <location>
        <begin position="442"/>
        <end position="472"/>
    </location>
</feature>
<feature type="compositionally biased region" description="Low complexity" evidence="2">
    <location>
        <begin position="452"/>
        <end position="472"/>
    </location>
</feature>
<feature type="binding site" description="axial binding residue" evidence="1">
    <location>
        <position position="388"/>
    </location>
    <ligand>
        <name>heme</name>
        <dbReference type="ChEBI" id="CHEBI:30413"/>
    </ligand>
    <ligandPart>
        <name>Fe</name>
        <dbReference type="ChEBI" id="CHEBI:18248"/>
    </ligandPart>
</feature>
<gene>
    <name type="primary">cyp135B1</name>
    <name type="ordered locus">Rv0568</name>
    <name type="ORF">MTV039.06</name>
</gene>